<feature type="chain" id="PRO_0000226353" description="Ankyrin repeat, SAM and basic leucine zipper domain-containing protein 1">
    <location>
        <begin position="1"/>
        <end position="475"/>
    </location>
</feature>
<feature type="repeat" description="ANK 1">
    <location>
        <begin position="45"/>
        <end position="74"/>
    </location>
</feature>
<feature type="repeat" description="ANK 2">
    <location>
        <begin position="78"/>
        <end position="107"/>
    </location>
</feature>
<feature type="repeat" description="ANK 3">
    <location>
        <begin position="110"/>
        <end position="144"/>
    </location>
</feature>
<feature type="repeat" description="ANK 4">
    <location>
        <begin position="148"/>
        <end position="177"/>
    </location>
</feature>
<feature type="repeat" description="ANK 5">
    <location>
        <begin position="181"/>
        <end position="210"/>
    </location>
</feature>
<feature type="repeat" description="ANK 6">
    <location>
        <begin position="214"/>
        <end position="243"/>
    </location>
</feature>
<feature type="domain" description="SAM">
    <location>
        <begin position="272"/>
        <end position="334"/>
    </location>
</feature>
<feature type="region of interest" description="Disordered" evidence="3">
    <location>
        <begin position="1"/>
        <end position="23"/>
    </location>
</feature>
<feature type="modified residue" description="Phosphoserine" evidence="2">
    <location>
        <position position="17"/>
    </location>
</feature>
<feature type="modified residue" description="Phosphoserine" evidence="2">
    <location>
        <position position="18"/>
    </location>
</feature>
<feature type="modified residue" description="Phosphoserine" evidence="2">
    <location>
        <position position="20"/>
    </location>
</feature>
<evidence type="ECO:0000250" key="1"/>
<evidence type="ECO:0000250" key="2">
    <source>
        <dbReference type="UniProtKB" id="Q8VD46"/>
    </source>
</evidence>
<evidence type="ECO:0000256" key="3">
    <source>
        <dbReference type="SAM" id="MobiDB-lite"/>
    </source>
</evidence>
<dbReference type="EMBL" id="DP000020">
    <property type="protein sequence ID" value="ABB89805.1"/>
    <property type="molecule type" value="Genomic_DNA"/>
</dbReference>
<dbReference type="RefSeq" id="NP_001107613.1">
    <property type="nucleotide sequence ID" value="NM_001114141.1"/>
</dbReference>
<dbReference type="SMR" id="Q2QLA4"/>
<dbReference type="FunCoup" id="Q2QLA4">
    <property type="interactions" value="63"/>
</dbReference>
<dbReference type="STRING" id="9796.ENSECAP00000009625"/>
<dbReference type="PaxDb" id="9796-ENSECAP00000009625"/>
<dbReference type="Ensembl" id="ENSECAT00000012205.2">
    <property type="protein sequence ID" value="ENSECAP00000009625.2"/>
    <property type="gene ID" value="ENSECAG00000011002.4"/>
</dbReference>
<dbReference type="GeneID" id="100071245"/>
<dbReference type="KEGG" id="ecb:100071245"/>
<dbReference type="CTD" id="136991"/>
<dbReference type="VGNC" id="VGNC:15601">
    <property type="gene designation" value="ASZ1"/>
</dbReference>
<dbReference type="GeneTree" id="ENSGT00880000138051"/>
<dbReference type="HOGENOM" id="CLU_053259_0_0_1"/>
<dbReference type="InParanoid" id="Q2QLA4"/>
<dbReference type="OMA" id="FVCKLTF"/>
<dbReference type="OrthoDB" id="439236at2759"/>
<dbReference type="Proteomes" id="UP000002281">
    <property type="component" value="Chromosome 4"/>
</dbReference>
<dbReference type="Bgee" id="ENSECAG00000011002">
    <property type="expression patterns" value="Expressed in testis and 9 other cell types or tissues"/>
</dbReference>
<dbReference type="ExpressionAtlas" id="Q2QLA4">
    <property type="expression patterns" value="baseline"/>
</dbReference>
<dbReference type="GO" id="GO:0033391">
    <property type="term" value="C:chromatoid body"/>
    <property type="evidence" value="ECO:0000314"/>
    <property type="project" value="MGI"/>
</dbReference>
<dbReference type="GO" id="GO:0071546">
    <property type="term" value="C:pi-body"/>
    <property type="evidence" value="ECO:0000250"/>
    <property type="project" value="UniProtKB"/>
</dbReference>
<dbReference type="GO" id="GO:0030154">
    <property type="term" value="P:cell differentiation"/>
    <property type="evidence" value="ECO:0007669"/>
    <property type="project" value="UniProtKB-KW"/>
</dbReference>
<dbReference type="GO" id="GO:0007140">
    <property type="term" value="P:male meiotic nuclear division"/>
    <property type="evidence" value="ECO:0000250"/>
    <property type="project" value="UniProtKB"/>
</dbReference>
<dbReference type="GO" id="GO:0031047">
    <property type="term" value="P:regulatory ncRNA-mediated gene silencing"/>
    <property type="evidence" value="ECO:0007669"/>
    <property type="project" value="UniProtKB-KW"/>
</dbReference>
<dbReference type="GO" id="GO:0007283">
    <property type="term" value="P:spermatogenesis"/>
    <property type="evidence" value="ECO:0000250"/>
    <property type="project" value="UniProtKB"/>
</dbReference>
<dbReference type="GO" id="GO:0010526">
    <property type="term" value="P:transposable element silencing"/>
    <property type="evidence" value="ECO:0000250"/>
    <property type="project" value="UniProtKB"/>
</dbReference>
<dbReference type="CDD" id="cd09521">
    <property type="entry name" value="SAM_ASZ1"/>
    <property type="match status" value="1"/>
</dbReference>
<dbReference type="FunFam" id="1.25.40.20:FF:000192">
    <property type="entry name" value="Ankyrin repeat, SAM and basic leucine zipper domain-containing 1"/>
    <property type="match status" value="1"/>
</dbReference>
<dbReference type="FunFam" id="1.10.150.50:FF:000060">
    <property type="entry name" value="Ankyrin repeat, SAM and basic leucine zipper domain-containing protein 1"/>
    <property type="match status" value="1"/>
</dbReference>
<dbReference type="Gene3D" id="1.25.40.20">
    <property type="entry name" value="Ankyrin repeat-containing domain"/>
    <property type="match status" value="2"/>
</dbReference>
<dbReference type="Gene3D" id="1.10.150.50">
    <property type="entry name" value="Transcription Factor, Ets-1"/>
    <property type="match status" value="1"/>
</dbReference>
<dbReference type="InterPro" id="IPR002110">
    <property type="entry name" value="Ankyrin_rpt"/>
</dbReference>
<dbReference type="InterPro" id="IPR036770">
    <property type="entry name" value="Ankyrin_rpt-contain_sf"/>
</dbReference>
<dbReference type="InterPro" id="IPR042650">
    <property type="entry name" value="Asz1_SAM"/>
</dbReference>
<dbReference type="InterPro" id="IPR001660">
    <property type="entry name" value="SAM"/>
</dbReference>
<dbReference type="InterPro" id="IPR013761">
    <property type="entry name" value="SAM/pointed_sf"/>
</dbReference>
<dbReference type="PANTHER" id="PTHR24157">
    <property type="entry name" value="ANKYRIN REPEAT, SAM AND BASIC LEUCINE ZIPPER DOMAIN-CONTAINING PROTEIN 1"/>
    <property type="match status" value="1"/>
</dbReference>
<dbReference type="PANTHER" id="PTHR24157:SF3">
    <property type="entry name" value="ANKYRIN REPEAT, SAM AND BASIC LEUCINE ZIPPER DOMAIN-CONTAINING PROTEIN 1"/>
    <property type="match status" value="1"/>
</dbReference>
<dbReference type="Pfam" id="PF12796">
    <property type="entry name" value="Ank_2"/>
    <property type="match status" value="1"/>
</dbReference>
<dbReference type="Pfam" id="PF13637">
    <property type="entry name" value="Ank_4"/>
    <property type="match status" value="1"/>
</dbReference>
<dbReference type="Pfam" id="PF07647">
    <property type="entry name" value="SAM_2"/>
    <property type="match status" value="1"/>
</dbReference>
<dbReference type="PRINTS" id="PR01415">
    <property type="entry name" value="ANKYRIN"/>
</dbReference>
<dbReference type="SMART" id="SM00248">
    <property type="entry name" value="ANK"/>
    <property type="match status" value="5"/>
</dbReference>
<dbReference type="SUPFAM" id="SSF48403">
    <property type="entry name" value="Ankyrin repeat"/>
    <property type="match status" value="1"/>
</dbReference>
<dbReference type="SUPFAM" id="SSF140860">
    <property type="entry name" value="Pseudo ankyrin repeat-like"/>
    <property type="match status" value="1"/>
</dbReference>
<dbReference type="SUPFAM" id="SSF47769">
    <property type="entry name" value="SAM/Pointed domain"/>
    <property type="match status" value="1"/>
</dbReference>
<dbReference type="PROSITE" id="PS50297">
    <property type="entry name" value="ANK_REP_REGION"/>
    <property type="match status" value="1"/>
</dbReference>
<dbReference type="PROSITE" id="PS50088">
    <property type="entry name" value="ANK_REPEAT"/>
    <property type="match status" value="3"/>
</dbReference>
<organism>
    <name type="scientific">Equus caballus</name>
    <name type="common">Horse</name>
    <dbReference type="NCBI Taxonomy" id="9796"/>
    <lineage>
        <taxon>Eukaryota</taxon>
        <taxon>Metazoa</taxon>
        <taxon>Chordata</taxon>
        <taxon>Craniata</taxon>
        <taxon>Vertebrata</taxon>
        <taxon>Euteleostomi</taxon>
        <taxon>Mammalia</taxon>
        <taxon>Eutheria</taxon>
        <taxon>Laurasiatheria</taxon>
        <taxon>Perissodactyla</taxon>
        <taxon>Equidae</taxon>
        <taxon>Equus</taxon>
    </lineage>
</organism>
<accession>Q2QLA4</accession>
<gene>
    <name type="primary">ASZ1</name>
    <name type="synonym">GASZ</name>
</gene>
<protein>
    <recommendedName>
        <fullName>Ankyrin repeat, SAM and basic leucine zipper domain-containing protein 1</fullName>
    </recommendedName>
    <alternativeName>
        <fullName>Germ cell-specific ankyrin, SAM and basic leucine zipper domain-containing protein</fullName>
    </alternativeName>
</protein>
<name>ASZ1_HORSE</name>
<proteinExistence type="inferred from homology"/>
<reference key="1">
    <citation type="submission" date="2005-11" db="EMBL/GenBank/DDBJ databases">
        <title>NISC comparative sequencing initiative.</title>
        <authorList>
            <person name="Antonellis A."/>
            <person name="Ayele K."/>
            <person name="Benjamin B."/>
            <person name="Blakesley R.W."/>
            <person name="Boakye A."/>
            <person name="Bouffard G.G."/>
            <person name="Brinkley C."/>
            <person name="Brooks S."/>
            <person name="Chu G."/>
            <person name="Coleman H."/>
            <person name="Engle J."/>
            <person name="Gestole M."/>
            <person name="Greene A."/>
            <person name="Guan X."/>
            <person name="Gupta J."/>
            <person name="Haghighi P."/>
            <person name="Han J."/>
            <person name="Hansen N."/>
            <person name="Ho S.-L."/>
            <person name="Hu P."/>
            <person name="Hunter G."/>
            <person name="Hurle B."/>
            <person name="Idol J.R."/>
            <person name="Kwong P."/>
            <person name="Laric P."/>
            <person name="Larson S."/>
            <person name="Lee-Lin S.-Q."/>
            <person name="Legaspi R."/>
            <person name="Madden M."/>
            <person name="Maduro Q.L."/>
            <person name="Maduro V.B."/>
            <person name="Margulies E.H."/>
            <person name="Masiello C."/>
            <person name="Maskeri B."/>
            <person name="McDowell J."/>
            <person name="Mojidi H.A."/>
            <person name="Mullikin J.C."/>
            <person name="Oestreicher J.S."/>
            <person name="Park M."/>
            <person name="Portnoy M.E."/>
            <person name="Prasad A."/>
            <person name="Puri O."/>
            <person name="Reddix-Dugue N."/>
            <person name="Schandler K."/>
            <person name="Schueler M.G."/>
            <person name="Sison C."/>
            <person name="Stantripop S."/>
            <person name="Stephen E."/>
            <person name="Taye A."/>
            <person name="Thomas J.W."/>
            <person name="Thomas P.J."/>
            <person name="Tsipouri V."/>
            <person name="Ung L."/>
            <person name="Vogt J.L."/>
            <person name="Wetherby K.D."/>
            <person name="Young A."/>
            <person name="Green E.D."/>
        </authorList>
    </citation>
    <scope>NUCLEOTIDE SEQUENCE [LARGE SCALE GENOMIC DNA]</scope>
</reference>
<keyword id="KW-0040">ANK repeat</keyword>
<keyword id="KW-0963">Cytoplasm</keyword>
<keyword id="KW-0217">Developmental protein</keyword>
<keyword id="KW-0221">Differentiation</keyword>
<keyword id="KW-0469">Meiosis</keyword>
<keyword id="KW-0597">Phosphoprotein</keyword>
<keyword id="KW-1185">Reference proteome</keyword>
<keyword id="KW-0677">Repeat</keyword>
<keyword id="KW-0943">RNA-mediated gene silencing</keyword>
<keyword id="KW-0744">Spermatogenesis</keyword>
<comment type="function">
    <text evidence="1">Plays a central role during spermatogenesis by repressing transposable elements and preventing their mobilization, which is essential for the germline integrity. Acts via the piRNA metabolic process, which mediates the repression of transposable elements during meiosis by forming complexes composed of piRNAs and Piwi proteins and governs the methylation and subsequent repression of transposons. Its association with pi-bodies suggests a participation in the primary piRNAs metabolic process. Required prior to the pachytene stage to facilitate the production of multiple types of piRNAs, including those associated with repeats involved in the regulation of retrotransposons. May act by mediating protein-protein interactions during germ cell maturation (By similarity).</text>
</comment>
<comment type="subunit">
    <text evidence="1">Interacts with DDX4, PIWIL1, RANBP9 and TDRD1.</text>
</comment>
<comment type="subcellular location">
    <subcellularLocation>
        <location evidence="1">Cytoplasm</location>
    </subcellularLocation>
    <text evidence="1">Component of the meiotic nuage, also named P granule, a germ-cell-specific organelle required to repress transposon activity during meiosis. Specifically localizes to pi-bodies, a subset of the nuage which contains primary piRNAs (By similarity).</text>
</comment>
<sequence>MAAARFRGLAVAGGGESSESEDDGWEIGYLDRAAQKLKEPLPIEEKNETFKRALTAGDVALVEELLDSGISVDSSFRYGWTPLMYAASVSNVDLVRVLLDRGAKASFDKDKQTILITACSARGSEEQILKCVELLLSRNADPNVACRRLMTPIMYAARDGHPQVVALLVAHGAEVNTQDENGYTALTWAARQGHKNVVLKLLELGANKMLQTKDGKTPSEIAKRNKHLEIFNFLSLTLNPLEGKLQQLTKEETICKLLTTKSDKEKDHIFSSYTAFGDLEIFLHGLGLEHMTDLLKERDITLRHLLTMRKDEFTKNGITNKDQQKILAALKELEVEEIKFGELPEMAKLEISGDEFLNFLLKLNKQCGHLITAVQNIINELPVNSHKIVLEWASPRNFTSVCEELVGKVEDLSEEVCKLKDLIQKLQNERENDPAHIPLMEEVSTWNSRILKRTAITVCGFGFLLFICKLTFQRQ</sequence>